<evidence type="ECO:0000255" key="1">
    <source>
        <dbReference type="HAMAP-Rule" id="MF_00281"/>
    </source>
</evidence>
<dbReference type="EC" id="6.1.1.20" evidence="1"/>
<dbReference type="EMBL" id="CP000733">
    <property type="protein sequence ID" value="ABS77123.1"/>
    <property type="molecule type" value="Genomic_DNA"/>
</dbReference>
<dbReference type="RefSeq" id="WP_010958149.1">
    <property type="nucleotide sequence ID" value="NC_009727.1"/>
</dbReference>
<dbReference type="SMR" id="A9KGB7"/>
<dbReference type="KEGG" id="cbd:CBUD_1411"/>
<dbReference type="HOGENOM" id="CLU_025086_0_1_6"/>
<dbReference type="Proteomes" id="UP000008555">
    <property type="component" value="Chromosome"/>
</dbReference>
<dbReference type="GO" id="GO:0005737">
    <property type="term" value="C:cytoplasm"/>
    <property type="evidence" value="ECO:0007669"/>
    <property type="project" value="UniProtKB-SubCell"/>
</dbReference>
<dbReference type="GO" id="GO:0005524">
    <property type="term" value="F:ATP binding"/>
    <property type="evidence" value="ECO:0007669"/>
    <property type="project" value="UniProtKB-UniRule"/>
</dbReference>
<dbReference type="GO" id="GO:0000287">
    <property type="term" value="F:magnesium ion binding"/>
    <property type="evidence" value="ECO:0007669"/>
    <property type="project" value="UniProtKB-UniRule"/>
</dbReference>
<dbReference type="GO" id="GO:0004826">
    <property type="term" value="F:phenylalanine-tRNA ligase activity"/>
    <property type="evidence" value="ECO:0007669"/>
    <property type="project" value="UniProtKB-UniRule"/>
</dbReference>
<dbReference type="GO" id="GO:0000049">
    <property type="term" value="F:tRNA binding"/>
    <property type="evidence" value="ECO:0007669"/>
    <property type="project" value="InterPro"/>
</dbReference>
<dbReference type="GO" id="GO:0006432">
    <property type="term" value="P:phenylalanyl-tRNA aminoacylation"/>
    <property type="evidence" value="ECO:0007669"/>
    <property type="project" value="UniProtKB-UniRule"/>
</dbReference>
<dbReference type="CDD" id="cd00496">
    <property type="entry name" value="PheRS_alpha_core"/>
    <property type="match status" value="1"/>
</dbReference>
<dbReference type="FunFam" id="3.30.930.10:FF:000003">
    <property type="entry name" value="Phenylalanine--tRNA ligase alpha subunit"/>
    <property type="match status" value="1"/>
</dbReference>
<dbReference type="Gene3D" id="3.30.930.10">
    <property type="entry name" value="Bira Bifunctional Protein, Domain 2"/>
    <property type="match status" value="1"/>
</dbReference>
<dbReference type="HAMAP" id="MF_00281">
    <property type="entry name" value="Phe_tRNA_synth_alpha1"/>
    <property type="match status" value="1"/>
</dbReference>
<dbReference type="InterPro" id="IPR006195">
    <property type="entry name" value="aa-tRNA-synth_II"/>
</dbReference>
<dbReference type="InterPro" id="IPR045864">
    <property type="entry name" value="aa-tRNA-synth_II/BPL/LPL"/>
</dbReference>
<dbReference type="InterPro" id="IPR004529">
    <property type="entry name" value="Phe-tRNA-synth_IIc_asu"/>
</dbReference>
<dbReference type="InterPro" id="IPR004188">
    <property type="entry name" value="Phe-tRNA_ligase_II_N"/>
</dbReference>
<dbReference type="InterPro" id="IPR022911">
    <property type="entry name" value="Phe_tRNA_ligase_alpha1_bac"/>
</dbReference>
<dbReference type="InterPro" id="IPR002319">
    <property type="entry name" value="Phenylalanyl-tRNA_Synthase"/>
</dbReference>
<dbReference type="InterPro" id="IPR010978">
    <property type="entry name" value="tRNA-bd_arm"/>
</dbReference>
<dbReference type="NCBIfam" id="TIGR00468">
    <property type="entry name" value="pheS"/>
    <property type="match status" value="1"/>
</dbReference>
<dbReference type="PANTHER" id="PTHR11538:SF41">
    <property type="entry name" value="PHENYLALANINE--TRNA LIGASE, MITOCHONDRIAL"/>
    <property type="match status" value="1"/>
</dbReference>
<dbReference type="PANTHER" id="PTHR11538">
    <property type="entry name" value="PHENYLALANYL-TRNA SYNTHETASE"/>
    <property type="match status" value="1"/>
</dbReference>
<dbReference type="Pfam" id="PF02912">
    <property type="entry name" value="Phe_tRNA-synt_N"/>
    <property type="match status" value="1"/>
</dbReference>
<dbReference type="Pfam" id="PF01409">
    <property type="entry name" value="tRNA-synt_2d"/>
    <property type="match status" value="1"/>
</dbReference>
<dbReference type="SUPFAM" id="SSF55681">
    <property type="entry name" value="Class II aaRS and biotin synthetases"/>
    <property type="match status" value="1"/>
</dbReference>
<dbReference type="SUPFAM" id="SSF46589">
    <property type="entry name" value="tRNA-binding arm"/>
    <property type="match status" value="1"/>
</dbReference>
<dbReference type="PROSITE" id="PS50862">
    <property type="entry name" value="AA_TRNA_LIGASE_II"/>
    <property type="match status" value="1"/>
</dbReference>
<gene>
    <name evidence="1" type="primary">pheS</name>
    <name type="ordered locus">CBUD_1411</name>
</gene>
<accession>A9KGB7</accession>
<organism>
    <name type="scientific">Coxiella burnetii (strain Dugway 5J108-111)</name>
    <dbReference type="NCBI Taxonomy" id="434922"/>
    <lineage>
        <taxon>Bacteria</taxon>
        <taxon>Pseudomonadati</taxon>
        <taxon>Pseudomonadota</taxon>
        <taxon>Gammaproteobacteria</taxon>
        <taxon>Legionellales</taxon>
        <taxon>Coxiellaceae</taxon>
        <taxon>Coxiella</taxon>
    </lineage>
</organism>
<keyword id="KW-0030">Aminoacyl-tRNA synthetase</keyword>
<keyword id="KW-0067">ATP-binding</keyword>
<keyword id="KW-0963">Cytoplasm</keyword>
<keyword id="KW-0436">Ligase</keyword>
<keyword id="KW-0460">Magnesium</keyword>
<keyword id="KW-0479">Metal-binding</keyword>
<keyword id="KW-0547">Nucleotide-binding</keyword>
<keyword id="KW-0648">Protein biosynthesis</keyword>
<feature type="chain" id="PRO_1000078833" description="Phenylalanine--tRNA ligase alpha subunit">
    <location>
        <begin position="1"/>
        <end position="328"/>
    </location>
</feature>
<feature type="binding site" evidence="1">
    <location>
        <position position="253"/>
    </location>
    <ligand>
        <name>Mg(2+)</name>
        <dbReference type="ChEBI" id="CHEBI:18420"/>
        <note>shared with beta subunit</note>
    </ligand>
</feature>
<reference key="1">
    <citation type="journal article" date="2009" name="Infect. Immun.">
        <title>Comparative genomics reveal extensive transposon-mediated genomic plasticity and diversity among potential effector proteins within the genus Coxiella.</title>
        <authorList>
            <person name="Beare P.A."/>
            <person name="Unsworth N."/>
            <person name="Andoh M."/>
            <person name="Voth D.E."/>
            <person name="Omsland A."/>
            <person name="Gilk S.D."/>
            <person name="Williams K.P."/>
            <person name="Sobral B.W."/>
            <person name="Kupko J.J. III"/>
            <person name="Porcella S.F."/>
            <person name="Samuel J.E."/>
            <person name="Heinzen R.A."/>
        </authorList>
    </citation>
    <scope>NUCLEOTIDE SEQUENCE [LARGE SCALE GENOMIC DNA]</scope>
    <source>
        <strain>Dugway 5J108-111</strain>
    </source>
</reference>
<sequence length="328" mass="37850">MQNQLNALLQSAKKSVADAQSEIVLEEIRVDYLGKKGKLTELLKSVGQMPADQRPLLGKAVNEIKREIQQLLNAKSTQLREKSLQEKLNKEKVDITLRGRYDHLGAIHPISRVSERVSQLFSMLGFQIAEGPEIENEYYNFEALNIPADHPARTMADTFYFSGDKLLRTHTSPVQIREMEKQGVPIRLIALGRVYRRDLDQTHTPMFHQVEGLVIDKRSTFANLKGLLQQFLNCFFEKDVRLRFRPSYFPFTEPSAEVDIYQPRTDKWLEVLGCGMVHPNVLRNLNIDPDEYSGFAFGIGLDRLAMLRYEVTDLRLFFENDLRFLGQF</sequence>
<proteinExistence type="inferred from homology"/>
<comment type="catalytic activity">
    <reaction evidence="1">
        <text>tRNA(Phe) + L-phenylalanine + ATP = L-phenylalanyl-tRNA(Phe) + AMP + diphosphate + H(+)</text>
        <dbReference type="Rhea" id="RHEA:19413"/>
        <dbReference type="Rhea" id="RHEA-COMP:9668"/>
        <dbReference type="Rhea" id="RHEA-COMP:9699"/>
        <dbReference type="ChEBI" id="CHEBI:15378"/>
        <dbReference type="ChEBI" id="CHEBI:30616"/>
        <dbReference type="ChEBI" id="CHEBI:33019"/>
        <dbReference type="ChEBI" id="CHEBI:58095"/>
        <dbReference type="ChEBI" id="CHEBI:78442"/>
        <dbReference type="ChEBI" id="CHEBI:78531"/>
        <dbReference type="ChEBI" id="CHEBI:456215"/>
        <dbReference type="EC" id="6.1.1.20"/>
    </reaction>
</comment>
<comment type="cofactor">
    <cofactor evidence="1">
        <name>Mg(2+)</name>
        <dbReference type="ChEBI" id="CHEBI:18420"/>
    </cofactor>
    <text evidence="1">Binds 2 magnesium ions per tetramer.</text>
</comment>
<comment type="subunit">
    <text evidence="1">Tetramer of two alpha and two beta subunits.</text>
</comment>
<comment type="subcellular location">
    <subcellularLocation>
        <location evidence="1">Cytoplasm</location>
    </subcellularLocation>
</comment>
<comment type="similarity">
    <text evidence="1">Belongs to the class-II aminoacyl-tRNA synthetase family. Phe-tRNA synthetase alpha subunit type 1 subfamily.</text>
</comment>
<name>SYFA_COXBN</name>
<protein>
    <recommendedName>
        <fullName evidence="1">Phenylalanine--tRNA ligase alpha subunit</fullName>
        <ecNumber evidence="1">6.1.1.20</ecNumber>
    </recommendedName>
    <alternativeName>
        <fullName evidence="1">Phenylalanyl-tRNA synthetase alpha subunit</fullName>
        <shortName evidence="1">PheRS</shortName>
    </alternativeName>
</protein>